<reference key="1">
    <citation type="journal article" date="2000" name="Nature">
        <title>Sequence and analysis of chromosome 1 of the plant Arabidopsis thaliana.</title>
        <authorList>
            <person name="Theologis A."/>
            <person name="Ecker J.R."/>
            <person name="Palm C.J."/>
            <person name="Federspiel N.A."/>
            <person name="Kaul S."/>
            <person name="White O."/>
            <person name="Alonso J."/>
            <person name="Altafi H."/>
            <person name="Araujo R."/>
            <person name="Bowman C.L."/>
            <person name="Brooks S.Y."/>
            <person name="Buehler E."/>
            <person name="Chan A."/>
            <person name="Chao Q."/>
            <person name="Chen H."/>
            <person name="Cheuk R.F."/>
            <person name="Chin C.W."/>
            <person name="Chung M.K."/>
            <person name="Conn L."/>
            <person name="Conway A.B."/>
            <person name="Conway A.R."/>
            <person name="Creasy T.H."/>
            <person name="Dewar K."/>
            <person name="Dunn P."/>
            <person name="Etgu P."/>
            <person name="Feldblyum T.V."/>
            <person name="Feng J.-D."/>
            <person name="Fong B."/>
            <person name="Fujii C.Y."/>
            <person name="Gill J.E."/>
            <person name="Goldsmith A.D."/>
            <person name="Haas B."/>
            <person name="Hansen N.F."/>
            <person name="Hughes B."/>
            <person name="Huizar L."/>
            <person name="Hunter J.L."/>
            <person name="Jenkins J."/>
            <person name="Johnson-Hopson C."/>
            <person name="Khan S."/>
            <person name="Khaykin E."/>
            <person name="Kim C.J."/>
            <person name="Koo H.L."/>
            <person name="Kremenetskaia I."/>
            <person name="Kurtz D.B."/>
            <person name="Kwan A."/>
            <person name="Lam B."/>
            <person name="Langin-Hooper S."/>
            <person name="Lee A."/>
            <person name="Lee J.M."/>
            <person name="Lenz C.A."/>
            <person name="Li J.H."/>
            <person name="Li Y.-P."/>
            <person name="Lin X."/>
            <person name="Liu S.X."/>
            <person name="Liu Z.A."/>
            <person name="Luros J.S."/>
            <person name="Maiti R."/>
            <person name="Marziali A."/>
            <person name="Militscher J."/>
            <person name="Miranda M."/>
            <person name="Nguyen M."/>
            <person name="Nierman W.C."/>
            <person name="Osborne B.I."/>
            <person name="Pai G."/>
            <person name="Peterson J."/>
            <person name="Pham P.K."/>
            <person name="Rizzo M."/>
            <person name="Rooney T."/>
            <person name="Rowley D."/>
            <person name="Sakano H."/>
            <person name="Salzberg S.L."/>
            <person name="Schwartz J.R."/>
            <person name="Shinn P."/>
            <person name="Southwick A.M."/>
            <person name="Sun H."/>
            <person name="Tallon L.J."/>
            <person name="Tambunga G."/>
            <person name="Toriumi M.J."/>
            <person name="Town C.D."/>
            <person name="Utterback T."/>
            <person name="Van Aken S."/>
            <person name="Vaysberg M."/>
            <person name="Vysotskaia V.S."/>
            <person name="Walker M."/>
            <person name="Wu D."/>
            <person name="Yu G."/>
            <person name="Fraser C.M."/>
            <person name="Venter J.C."/>
            <person name="Davis R.W."/>
        </authorList>
    </citation>
    <scope>NUCLEOTIDE SEQUENCE [LARGE SCALE GENOMIC DNA]</scope>
    <source>
        <strain>cv. Columbia</strain>
    </source>
</reference>
<reference key="2">
    <citation type="journal article" date="2017" name="Plant J.">
        <title>Araport11: a complete reannotation of the Arabidopsis thaliana reference genome.</title>
        <authorList>
            <person name="Cheng C.Y."/>
            <person name="Krishnakumar V."/>
            <person name="Chan A.P."/>
            <person name="Thibaud-Nissen F."/>
            <person name="Schobel S."/>
            <person name="Town C.D."/>
        </authorList>
    </citation>
    <scope>GENOME REANNOTATION</scope>
    <source>
        <strain>cv. Columbia</strain>
    </source>
</reference>
<reference key="3">
    <citation type="journal article" date="2003" name="Science">
        <title>Empirical analysis of transcriptional activity in the Arabidopsis genome.</title>
        <authorList>
            <person name="Yamada K."/>
            <person name="Lim J."/>
            <person name="Dale J.M."/>
            <person name="Chen H."/>
            <person name="Shinn P."/>
            <person name="Palm C.J."/>
            <person name="Southwick A.M."/>
            <person name="Wu H.C."/>
            <person name="Kim C.J."/>
            <person name="Nguyen M."/>
            <person name="Pham P.K."/>
            <person name="Cheuk R.F."/>
            <person name="Karlin-Newmann G."/>
            <person name="Liu S.X."/>
            <person name="Lam B."/>
            <person name="Sakano H."/>
            <person name="Wu T."/>
            <person name="Yu G."/>
            <person name="Miranda M."/>
            <person name="Quach H.L."/>
            <person name="Tripp M."/>
            <person name="Chang C.H."/>
            <person name="Lee J.M."/>
            <person name="Toriumi M.J."/>
            <person name="Chan M.M."/>
            <person name="Tang C.C."/>
            <person name="Onodera C.S."/>
            <person name="Deng J.M."/>
            <person name="Akiyama K."/>
            <person name="Ansari Y."/>
            <person name="Arakawa T."/>
            <person name="Banh J."/>
            <person name="Banno F."/>
            <person name="Bowser L."/>
            <person name="Brooks S.Y."/>
            <person name="Carninci P."/>
            <person name="Chao Q."/>
            <person name="Choy N."/>
            <person name="Enju A."/>
            <person name="Goldsmith A.D."/>
            <person name="Gurjal M."/>
            <person name="Hansen N.F."/>
            <person name="Hayashizaki Y."/>
            <person name="Johnson-Hopson C."/>
            <person name="Hsuan V.W."/>
            <person name="Iida K."/>
            <person name="Karnes M."/>
            <person name="Khan S."/>
            <person name="Koesema E."/>
            <person name="Ishida J."/>
            <person name="Jiang P.X."/>
            <person name="Jones T."/>
            <person name="Kawai J."/>
            <person name="Kamiya A."/>
            <person name="Meyers C."/>
            <person name="Nakajima M."/>
            <person name="Narusaka M."/>
            <person name="Seki M."/>
            <person name="Sakurai T."/>
            <person name="Satou M."/>
            <person name="Tamse R."/>
            <person name="Vaysberg M."/>
            <person name="Wallender E.K."/>
            <person name="Wong C."/>
            <person name="Yamamura Y."/>
            <person name="Yuan S."/>
            <person name="Shinozaki K."/>
            <person name="Davis R.W."/>
            <person name="Theologis A."/>
            <person name="Ecker J.R."/>
        </authorList>
    </citation>
    <scope>NUCLEOTIDE SEQUENCE [LARGE SCALE MRNA] (ISOFORM 1)</scope>
    <source>
        <strain>cv. Columbia</strain>
    </source>
</reference>
<reference key="4">
    <citation type="journal article" date="2014" name="Science">
        <title>Plant development. Arabidopsis NAC45/86 direct sieve element morphogenesis culminating in enucleation.</title>
        <authorList>
            <person name="Furuta K.M."/>
            <person name="Yadav S.R."/>
            <person name="Lehesranta S."/>
            <person name="Belevich I."/>
            <person name="Miyashima S."/>
            <person name="Heo J.O."/>
            <person name="Vaten A."/>
            <person name="Lindgren O."/>
            <person name="De Rybel B."/>
            <person name="Van Isterdael G."/>
            <person name="Somervuo P."/>
            <person name="Lichtenberger R."/>
            <person name="Rocha R."/>
            <person name="Thitamadee S."/>
            <person name="Taehtiharju S."/>
            <person name="Auvinen P."/>
            <person name="Beeckman T."/>
            <person name="Jokitalo E."/>
            <person name="Helariutta Y."/>
        </authorList>
    </citation>
    <scope>FUNCTION</scope>
    <scope>INDUCTION BY NAC045 AND NAC086</scope>
</reference>
<organism evidence="11">
    <name type="scientific">Arabidopsis thaliana</name>
    <name type="common">Mouse-ear cress</name>
    <dbReference type="NCBI Taxonomy" id="3702"/>
    <lineage>
        <taxon>Eukaryota</taxon>
        <taxon>Viridiplantae</taxon>
        <taxon>Streptophyta</taxon>
        <taxon>Embryophyta</taxon>
        <taxon>Tracheophyta</taxon>
        <taxon>Spermatophyta</taxon>
        <taxon>Magnoliopsida</taxon>
        <taxon>eudicotyledons</taxon>
        <taxon>Gunneridae</taxon>
        <taxon>Pentapetalae</taxon>
        <taxon>rosids</taxon>
        <taxon>malvids</taxon>
        <taxon>Brassicales</taxon>
        <taxon>Brassicaceae</taxon>
        <taxon>Camelineae</taxon>
        <taxon>Arabidopsis</taxon>
    </lineage>
</organism>
<evidence type="ECO:0000250" key="1">
    <source>
        <dbReference type="UniProtKB" id="Q682U6"/>
    </source>
</evidence>
<evidence type="ECO:0000250" key="2">
    <source>
        <dbReference type="UniProtKB" id="Q91XB0"/>
    </source>
</evidence>
<evidence type="ECO:0000255" key="3"/>
<evidence type="ECO:0000256" key="4">
    <source>
        <dbReference type="SAM" id="MobiDB-lite"/>
    </source>
</evidence>
<evidence type="ECO:0000269" key="5">
    <source>
    </source>
</evidence>
<evidence type="ECO:0000303" key="6">
    <source>
    </source>
</evidence>
<evidence type="ECO:0000305" key="7"/>
<evidence type="ECO:0000305" key="8">
    <source>
    </source>
</evidence>
<evidence type="ECO:0000312" key="9">
    <source>
        <dbReference type="Araport" id="AT1G74390"/>
    </source>
</evidence>
<evidence type="ECO:0000312" key="10">
    <source>
        <dbReference type="EMBL" id="AAG52378.1"/>
    </source>
</evidence>
<evidence type="ECO:0000312" key="11">
    <source>
        <dbReference type="Proteomes" id="UP000006548"/>
    </source>
</evidence>
<keyword id="KW-0025">Alternative splicing</keyword>
<keyword id="KW-0269">Exonuclease</keyword>
<keyword id="KW-0378">Hydrolase</keyword>
<keyword id="KW-0460">Magnesium</keyword>
<keyword id="KW-0479">Metal-binding</keyword>
<keyword id="KW-0540">Nuclease</keyword>
<keyword id="KW-1185">Reference proteome</keyword>
<comment type="function">
    <text evidence="8">Probable exonuclease that may be involved in enuclation of sieve elements.</text>
</comment>
<comment type="cofactor">
    <cofactor evidence="1">
        <name>Mg(2+)</name>
        <dbReference type="ChEBI" id="CHEBI:18420"/>
    </cofactor>
</comment>
<comment type="alternative products">
    <event type="alternative splicing"/>
    <isoform>
        <id>Q9CA74-1</id>
        <name>1</name>
        <sequence type="displayed"/>
    </isoform>
    <text evidence="7">A number of isoforms are produced.</text>
</comment>
<comment type="induction">
    <text evidence="5">Regulated by the transcription factors NAC045 and NAC086.</text>
</comment>
<proteinExistence type="evidence at transcript level"/>
<feature type="chain" id="PRO_0000430890" description="Protein NEN3">
    <location>
        <begin position="1"/>
        <end position="506"/>
    </location>
</feature>
<feature type="domain" description="Exonuclease" evidence="3">
    <location>
        <begin position="15"/>
        <end position="176"/>
    </location>
</feature>
<feature type="region of interest" description="Disordered" evidence="4">
    <location>
        <begin position="204"/>
        <end position="240"/>
    </location>
</feature>
<feature type="region of interest" description="Disordered" evidence="4">
    <location>
        <begin position="289"/>
        <end position="313"/>
    </location>
</feature>
<feature type="compositionally biased region" description="Low complexity" evidence="4">
    <location>
        <begin position="222"/>
        <end position="238"/>
    </location>
</feature>
<feature type="compositionally biased region" description="Basic and acidic residues" evidence="4">
    <location>
        <begin position="290"/>
        <end position="299"/>
    </location>
</feature>
<feature type="active site" description="Proton donor/acceptor" evidence="2">
    <location>
        <position position="164"/>
    </location>
</feature>
<feature type="binding site" evidence="2">
    <location>
        <position position="17"/>
    </location>
    <ligand>
        <name>Mg(2+)</name>
        <dbReference type="ChEBI" id="CHEBI:18420"/>
        <label>1</label>
    </ligand>
</feature>
<feature type="binding site" evidence="2">
    <location>
        <position position="17"/>
    </location>
    <ligand>
        <name>Mg(2+)</name>
        <dbReference type="ChEBI" id="CHEBI:18420"/>
        <label>2</label>
    </ligand>
</feature>
<feature type="binding site" evidence="2">
    <location>
        <position position="19"/>
    </location>
    <ligand>
        <name>Mg(2+)</name>
        <dbReference type="ChEBI" id="CHEBI:18420"/>
        <label>1</label>
    </ligand>
</feature>
<feature type="binding site" evidence="2">
    <location>
        <position position="169"/>
    </location>
    <ligand>
        <name>Mg(2+)</name>
        <dbReference type="ChEBI" id="CHEBI:18420"/>
        <label>1</label>
    </ligand>
</feature>
<sequence>MASSLGGDERSEIAFFDLETAVPTKSGEPFAILEFGAILVCPRRLEELYSYSTLVRPTDLSLISTLTKRRSGITRDGVLSAHTFSEIADKVYDILHGRIWAGHNIIRFDCVRIREAFAEIGLSPPEPKATIDSLSLLSQKFGKRAGDMKMASLATYFGLGDQAHRSLDDVRMNLEVVKYCATVLFLESSVPDILTDMSWFSPRKSPRTRSNGKLVANGVRESSTSSSSSPKTDPSSSSVDATIVKNHPIVSLLTECSESDASSYDIEDPIDITTLIGKLRIGTLQTDAAEEAKTVRQQDESPPSPDSDAKDESFLGVNEVSVSSIRASLVPFYRGSLRMKLFHNDTPLHLCWHSLKVRFGISRKFVDHAGRPKLNIIVDAPLDLCKILDAVDAAAHNLPTDSSTNSDWRPTVIRKEGFANYPTARLHISSESNGDDTLCGTQVYQKEEPLGTNQKLDVSSDNLEKLESALLPGTLVDAFFSLEPYSYQQMAGIRLAVKKLVILLKK</sequence>
<dbReference type="EC" id="3.1.11.-"/>
<dbReference type="EMBL" id="AC011765">
    <property type="protein sequence ID" value="AAG52378.1"/>
    <property type="molecule type" value="Genomic_DNA"/>
</dbReference>
<dbReference type="EMBL" id="CP002684">
    <property type="protein sequence ID" value="AEE35585.1"/>
    <property type="molecule type" value="Genomic_DNA"/>
</dbReference>
<dbReference type="EMBL" id="CP002684">
    <property type="protein sequence ID" value="AEE35586.2"/>
    <property type="molecule type" value="Genomic_DNA"/>
</dbReference>
<dbReference type="EMBL" id="AY099717">
    <property type="protein sequence ID" value="AAM20568.1"/>
    <property type="molecule type" value="mRNA"/>
</dbReference>
<dbReference type="EMBL" id="BT000288">
    <property type="protein sequence ID" value="AAN15607.1"/>
    <property type="molecule type" value="mRNA"/>
</dbReference>
<dbReference type="PIR" id="F96772">
    <property type="entry name" value="F96772"/>
</dbReference>
<dbReference type="RefSeq" id="NP_001319380.1">
    <molecule id="Q9CA74-1"/>
    <property type="nucleotide sequence ID" value="NM_001334644.1"/>
</dbReference>
<dbReference type="RefSeq" id="NP_177579.1">
    <molecule id="Q9CA74-1"/>
    <property type="nucleotide sequence ID" value="NM_106099.3"/>
</dbReference>
<dbReference type="SMR" id="Q9CA74"/>
<dbReference type="FunCoup" id="Q9CA74">
    <property type="interactions" value="110"/>
</dbReference>
<dbReference type="STRING" id="3702.Q9CA74"/>
<dbReference type="PaxDb" id="3702-AT1G74390.1"/>
<dbReference type="ProteomicsDB" id="251291">
    <molecule id="Q9CA74-1"/>
</dbReference>
<dbReference type="EnsemblPlants" id="AT1G74390.1">
    <molecule id="Q9CA74-1"/>
    <property type="protein sequence ID" value="AT1G74390.1"/>
    <property type="gene ID" value="AT1G74390"/>
</dbReference>
<dbReference type="EnsemblPlants" id="AT1G74390.2">
    <molecule id="Q9CA74-1"/>
    <property type="protein sequence ID" value="AT1G74390.2"/>
    <property type="gene ID" value="AT1G74390"/>
</dbReference>
<dbReference type="GeneID" id="843780"/>
<dbReference type="Gramene" id="AT1G74390.1">
    <molecule id="Q9CA74-1"/>
    <property type="protein sequence ID" value="AT1G74390.1"/>
    <property type="gene ID" value="AT1G74390"/>
</dbReference>
<dbReference type="Gramene" id="AT1G74390.2">
    <molecule id="Q9CA74-1"/>
    <property type="protein sequence ID" value="AT1G74390.2"/>
    <property type="gene ID" value="AT1G74390"/>
</dbReference>
<dbReference type="KEGG" id="ath:AT1G74390"/>
<dbReference type="Araport" id="AT1G74390"/>
<dbReference type="TAIR" id="AT1G74390">
    <property type="gene designation" value="NEN3"/>
</dbReference>
<dbReference type="eggNOG" id="ENOG502QPPQ">
    <property type="taxonomic scope" value="Eukaryota"/>
</dbReference>
<dbReference type="HOGENOM" id="CLU_030072_0_0_1"/>
<dbReference type="InParanoid" id="Q9CA74"/>
<dbReference type="OMA" id="DDARYGT"/>
<dbReference type="OrthoDB" id="2018529at2759"/>
<dbReference type="PhylomeDB" id="Q9CA74"/>
<dbReference type="PRO" id="PR:Q9CA74"/>
<dbReference type="Proteomes" id="UP000006548">
    <property type="component" value="Chromosome 1"/>
</dbReference>
<dbReference type="ExpressionAtlas" id="Q9CA74">
    <property type="expression patterns" value="baseline and differential"/>
</dbReference>
<dbReference type="GO" id="GO:0004527">
    <property type="term" value="F:exonuclease activity"/>
    <property type="evidence" value="ECO:0007669"/>
    <property type="project" value="UniProtKB-KW"/>
</dbReference>
<dbReference type="GO" id="GO:0046872">
    <property type="term" value="F:metal ion binding"/>
    <property type="evidence" value="ECO:0007669"/>
    <property type="project" value="UniProtKB-KW"/>
</dbReference>
<dbReference type="GO" id="GO:0003676">
    <property type="term" value="F:nucleic acid binding"/>
    <property type="evidence" value="ECO:0007669"/>
    <property type="project" value="InterPro"/>
</dbReference>
<dbReference type="CDD" id="cd06127">
    <property type="entry name" value="DEDDh"/>
    <property type="match status" value="1"/>
</dbReference>
<dbReference type="FunFam" id="3.30.420.10:FF:000040">
    <property type="entry name" value="Exonuclease family protein"/>
    <property type="match status" value="1"/>
</dbReference>
<dbReference type="Gene3D" id="3.30.420.10">
    <property type="entry name" value="Ribonuclease H-like superfamily/Ribonuclease H"/>
    <property type="match status" value="1"/>
</dbReference>
<dbReference type="InterPro" id="IPR013520">
    <property type="entry name" value="Exonuclease_RNaseT/DNA_pol3"/>
</dbReference>
<dbReference type="InterPro" id="IPR012337">
    <property type="entry name" value="RNaseH-like_sf"/>
</dbReference>
<dbReference type="InterPro" id="IPR036397">
    <property type="entry name" value="RNaseH_sf"/>
</dbReference>
<dbReference type="PANTHER" id="PTHR30231">
    <property type="entry name" value="DNA POLYMERASE III SUBUNIT EPSILON"/>
    <property type="match status" value="1"/>
</dbReference>
<dbReference type="PANTHER" id="PTHR30231:SF27">
    <property type="entry name" value="PROTEIN NEN3"/>
    <property type="match status" value="1"/>
</dbReference>
<dbReference type="Pfam" id="PF00929">
    <property type="entry name" value="RNase_T"/>
    <property type="match status" value="1"/>
</dbReference>
<dbReference type="SMART" id="SM00479">
    <property type="entry name" value="EXOIII"/>
    <property type="match status" value="1"/>
</dbReference>
<dbReference type="SUPFAM" id="SSF53098">
    <property type="entry name" value="Ribonuclease H-like"/>
    <property type="match status" value="1"/>
</dbReference>
<gene>
    <name type="primary">NEN3</name>
    <name evidence="9" type="ordered locus">At1g74390</name>
    <name evidence="10" type="ORF">F1M20.7</name>
</gene>
<name>NEN3_ARATH</name>
<accession>Q9CA74</accession>
<accession>F4HVM5</accession>
<protein>
    <recommendedName>
        <fullName evidence="6">Protein NEN3</fullName>
    </recommendedName>
    <alternativeName>
        <fullName evidence="6">NAC45/NAC86-dependent exonuclease-domain protein 3</fullName>
        <ecNumber>3.1.11.-</ecNumber>
    </alternativeName>
</protein>